<accession>B2V9L9</accession>
<keyword id="KW-0997">Cell inner membrane</keyword>
<keyword id="KW-1003">Cell membrane</keyword>
<keyword id="KW-0407">Ion channel</keyword>
<keyword id="KW-0406">Ion transport</keyword>
<keyword id="KW-0472">Membrane</keyword>
<keyword id="KW-0479">Metal-binding</keyword>
<keyword id="KW-0915">Sodium</keyword>
<keyword id="KW-0812">Transmembrane</keyword>
<keyword id="KW-1133">Transmembrane helix</keyword>
<keyword id="KW-0813">Transport</keyword>
<comment type="function">
    <text evidence="1">Fluoride-specific ion channel. Important for reducing fluoride concentration in the cell, thus reducing its toxicity.</text>
</comment>
<comment type="catalytic activity">
    <reaction evidence="1">
        <text>fluoride(in) = fluoride(out)</text>
        <dbReference type="Rhea" id="RHEA:76159"/>
        <dbReference type="ChEBI" id="CHEBI:17051"/>
    </reaction>
    <physiologicalReaction direction="left-to-right" evidence="1">
        <dbReference type="Rhea" id="RHEA:76160"/>
    </physiologicalReaction>
</comment>
<comment type="activity regulation">
    <text evidence="1">Na(+) is not transported, but it plays an essential structural role and its presence is essential for fluoride channel function.</text>
</comment>
<comment type="subcellular location">
    <subcellularLocation>
        <location evidence="1">Cell inner membrane</location>
        <topology evidence="1">Multi-pass membrane protein</topology>
    </subcellularLocation>
</comment>
<comment type="similarity">
    <text evidence="1">Belongs to the fluoride channel Fluc/FEX (TC 1.A.43) family.</text>
</comment>
<name>FLUC_SULSY</name>
<sequence>MEKYLVIAVGGSIGAILRYLTGVYSAKFFGTWLPYGTLIVNVVGSFILSFFMILFLEKLSLDPLWRLFVAVGFCGSYTTLSSITYETLSIVMDGDYVRALLNIALNFGLSFLSAFAGIVLARML</sequence>
<gene>
    <name evidence="1" type="primary">fluC</name>
    <name evidence="1" type="synonym">crcB</name>
    <name type="ordered locus">SYO3AOP1_1023</name>
</gene>
<feature type="chain" id="PRO_1000125161" description="Fluoride-specific ion channel FluC">
    <location>
        <begin position="1"/>
        <end position="124"/>
    </location>
</feature>
<feature type="transmembrane region" description="Helical" evidence="1">
    <location>
        <begin position="4"/>
        <end position="24"/>
    </location>
</feature>
<feature type="transmembrane region" description="Helical" evidence="1">
    <location>
        <begin position="36"/>
        <end position="56"/>
    </location>
</feature>
<feature type="transmembrane region" description="Helical" evidence="1">
    <location>
        <begin position="63"/>
        <end position="83"/>
    </location>
</feature>
<feature type="transmembrane region" description="Helical" evidence="1">
    <location>
        <begin position="100"/>
        <end position="120"/>
    </location>
</feature>
<feature type="binding site" evidence="1">
    <location>
        <position position="75"/>
    </location>
    <ligand>
        <name>Na(+)</name>
        <dbReference type="ChEBI" id="CHEBI:29101"/>
        <note>structural</note>
    </ligand>
</feature>
<feature type="binding site" evidence="1">
    <location>
        <position position="78"/>
    </location>
    <ligand>
        <name>Na(+)</name>
        <dbReference type="ChEBI" id="CHEBI:29101"/>
        <note>structural</note>
    </ligand>
</feature>
<organism>
    <name type="scientific">Sulfurihydrogenibium sp. (strain YO3AOP1)</name>
    <dbReference type="NCBI Taxonomy" id="436114"/>
    <lineage>
        <taxon>Bacteria</taxon>
        <taxon>Pseudomonadati</taxon>
        <taxon>Aquificota</taxon>
        <taxon>Aquificia</taxon>
        <taxon>Aquificales</taxon>
        <taxon>Hydrogenothermaceae</taxon>
        <taxon>Sulfurihydrogenibium</taxon>
    </lineage>
</organism>
<dbReference type="EMBL" id="CP001080">
    <property type="protein sequence ID" value="ACD66642.1"/>
    <property type="molecule type" value="Genomic_DNA"/>
</dbReference>
<dbReference type="RefSeq" id="WP_012459712.1">
    <property type="nucleotide sequence ID" value="NC_010730.1"/>
</dbReference>
<dbReference type="SMR" id="B2V9L9"/>
<dbReference type="STRING" id="436114.SYO3AOP1_1023"/>
<dbReference type="KEGG" id="sul:SYO3AOP1_1023"/>
<dbReference type="eggNOG" id="COG0239">
    <property type="taxonomic scope" value="Bacteria"/>
</dbReference>
<dbReference type="HOGENOM" id="CLU_114342_3_0_0"/>
<dbReference type="GO" id="GO:0005886">
    <property type="term" value="C:plasma membrane"/>
    <property type="evidence" value="ECO:0007669"/>
    <property type="project" value="UniProtKB-SubCell"/>
</dbReference>
<dbReference type="GO" id="GO:0062054">
    <property type="term" value="F:fluoride channel activity"/>
    <property type="evidence" value="ECO:0007669"/>
    <property type="project" value="UniProtKB-UniRule"/>
</dbReference>
<dbReference type="GO" id="GO:0046872">
    <property type="term" value="F:metal ion binding"/>
    <property type="evidence" value="ECO:0007669"/>
    <property type="project" value="UniProtKB-KW"/>
</dbReference>
<dbReference type="GO" id="GO:0140114">
    <property type="term" value="P:cellular detoxification of fluoride"/>
    <property type="evidence" value="ECO:0007669"/>
    <property type="project" value="UniProtKB-UniRule"/>
</dbReference>
<dbReference type="HAMAP" id="MF_00454">
    <property type="entry name" value="FluC"/>
    <property type="match status" value="1"/>
</dbReference>
<dbReference type="InterPro" id="IPR003691">
    <property type="entry name" value="FluC"/>
</dbReference>
<dbReference type="NCBIfam" id="TIGR00494">
    <property type="entry name" value="crcB"/>
    <property type="match status" value="1"/>
</dbReference>
<dbReference type="PANTHER" id="PTHR28259">
    <property type="entry name" value="FLUORIDE EXPORT PROTEIN 1-RELATED"/>
    <property type="match status" value="1"/>
</dbReference>
<dbReference type="PANTHER" id="PTHR28259:SF1">
    <property type="entry name" value="FLUORIDE EXPORT PROTEIN 1-RELATED"/>
    <property type="match status" value="1"/>
</dbReference>
<dbReference type="Pfam" id="PF02537">
    <property type="entry name" value="CRCB"/>
    <property type="match status" value="1"/>
</dbReference>
<proteinExistence type="inferred from homology"/>
<evidence type="ECO:0000255" key="1">
    <source>
        <dbReference type="HAMAP-Rule" id="MF_00454"/>
    </source>
</evidence>
<reference key="1">
    <citation type="journal article" date="2009" name="J. Bacteriol.">
        <title>Complete and draft genome sequences of six members of the Aquificales.</title>
        <authorList>
            <person name="Reysenbach A.-L."/>
            <person name="Hamamura N."/>
            <person name="Podar M."/>
            <person name="Griffiths E."/>
            <person name="Ferreira S."/>
            <person name="Hochstein R."/>
            <person name="Heidelberg J."/>
            <person name="Johnson J."/>
            <person name="Mead D."/>
            <person name="Pohorille A."/>
            <person name="Sarmiento M."/>
            <person name="Schweighofer K."/>
            <person name="Seshadri R."/>
            <person name="Voytek M.A."/>
        </authorList>
    </citation>
    <scope>NUCLEOTIDE SEQUENCE [LARGE SCALE GENOMIC DNA]</scope>
    <source>
        <strain>YO3AOP1</strain>
    </source>
</reference>
<protein>
    <recommendedName>
        <fullName evidence="1">Fluoride-specific ion channel FluC</fullName>
    </recommendedName>
</protein>